<evidence type="ECO:0000255" key="1">
    <source>
        <dbReference type="HAMAP-Rule" id="MF_00081"/>
    </source>
</evidence>
<reference key="1">
    <citation type="submission" date="1998-07" db="EMBL/GenBank/DDBJ databases">
        <title>Cloning and sequence analysis of the dnaK operon of Lactobacillus sakei LTH681.</title>
        <authorList>
            <person name="Schmidt G."/>
            <person name="Hertel C."/>
            <person name="Hammes W.P."/>
        </authorList>
    </citation>
    <scope>NUCLEOTIDE SEQUENCE [GENOMIC DNA]</scope>
    <source>
        <strain>LTH681</strain>
    </source>
</reference>
<sequence>MLTERQLMILKEIIRLFTESGQPVGSKKLMSELPMHVSSATIRNDMADLENVGLIEKTHSSSGRVPSMKGYRYYLDHLIQPAVLNPMDVATVQQSFGRHYHKIDEIVSQSANILSNLTSYTAITLGPEMAEIRLTGFRLVPLGNHQVMAIIVTSAGTVDNQVFTIPNAISGDELEKAIRVVNDHLIGLPLTVVSQKLKTEVPALLMQYMGSPGGFLNIFDDVLKQASQERLYVGGQSNLLNFSELTDVSQLKSIYNIINQSDDLAKLLELSPGEANSQVQVRLGDEMTNDLLKNYSLMTVNYDVGEHGQGLIALLGPTSMPHSRMIGLLDLFREELAKKLIDYYADFDDNQS</sequence>
<proteinExistence type="inferred from homology"/>
<comment type="function">
    <text evidence="1">Negative regulator of class I heat shock genes (grpE-dnaK-dnaJ and groELS operons). Prevents heat-shock induction of these operons.</text>
</comment>
<comment type="similarity">
    <text evidence="1">Belongs to the HrcA family.</text>
</comment>
<accession>O87775</accession>
<keyword id="KW-0678">Repressor</keyword>
<keyword id="KW-0346">Stress response</keyword>
<keyword id="KW-0804">Transcription</keyword>
<keyword id="KW-0805">Transcription regulation</keyword>
<gene>
    <name evidence="1" type="primary">hrcA</name>
</gene>
<protein>
    <recommendedName>
        <fullName evidence="1">Heat-inducible transcription repressor HrcA</fullName>
    </recommendedName>
</protein>
<feature type="chain" id="PRO_0000182490" description="Heat-inducible transcription repressor HrcA">
    <location>
        <begin position="1"/>
        <end position="352"/>
    </location>
</feature>
<name>HRCA_LATSK</name>
<dbReference type="EMBL" id="AJ006274">
    <property type="protein sequence ID" value="CAA06939.1"/>
    <property type="molecule type" value="Genomic_DNA"/>
</dbReference>
<dbReference type="RefSeq" id="WP_016265327.1">
    <property type="nucleotide sequence ID" value="NZ_MKDO01000005.1"/>
</dbReference>
<dbReference type="SMR" id="O87775"/>
<dbReference type="GO" id="GO:0003677">
    <property type="term" value="F:DNA binding"/>
    <property type="evidence" value="ECO:0007669"/>
    <property type="project" value="InterPro"/>
</dbReference>
<dbReference type="GO" id="GO:0045892">
    <property type="term" value="P:negative regulation of DNA-templated transcription"/>
    <property type="evidence" value="ECO:0007669"/>
    <property type="project" value="UniProtKB-UniRule"/>
</dbReference>
<dbReference type="Gene3D" id="3.30.450.40">
    <property type="match status" value="1"/>
</dbReference>
<dbReference type="Gene3D" id="3.30.390.60">
    <property type="entry name" value="Heat-inducible transcription repressor hrca homolog, domain 3"/>
    <property type="match status" value="1"/>
</dbReference>
<dbReference type="Gene3D" id="1.10.10.10">
    <property type="entry name" value="Winged helix-like DNA-binding domain superfamily/Winged helix DNA-binding domain"/>
    <property type="match status" value="1"/>
</dbReference>
<dbReference type="HAMAP" id="MF_00081">
    <property type="entry name" value="HrcA"/>
    <property type="match status" value="1"/>
</dbReference>
<dbReference type="InterPro" id="IPR029016">
    <property type="entry name" value="GAF-like_dom_sf"/>
</dbReference>
<dbReference type="InterPro" id="IPR002571">
    <property type="entry name" value="HrcA"/>
</dbReference>
<dbReference type="InterPro" id="IPR021153">
    <property type="entry name" value="HrcA_C"/>
</dbReference>
<dbReference type="InterPro" id="IPR036388">
    <property type="entry name" value="WH-like_DNA-bd_sf"/>
</dbReference>
<dbReference type="InterPro" id="IPR036390">
    <property type="entry name" value="WH_DNA-bd_sf"/>
</dbReference>
<dbReference type="InterPro" id="IPR005104">
    <property type="entry name" value="WHTH_HrcA_DNA-bd"/>
</dbReference>
<dbReference type="InterPro" id="IPR023120">
    <property type="entry name" value="WHTH_transcript_rep_HrcA_IDD"/>
</dbReference>
<dbReference type="NCBIfam" id="TIGR00331">
    <property type="entry name" value="hrcA"/>
    <property type="match status" value="1"/>
</dbReference>
<dbReference type="PANTHER" id="PTHR34824">
    <property type="entry name" value="HEAT-INDUCIBLE TRANSCRIPTION REPRESSOR HRCA"/>
    <property type="match status" value="1"/>
</dbReference>
<dbReference type="PANTHER" id="PTHR34824:SF1">
    <property type="entry name" value="HEAT-INDUCIBLE TRANSCRIPTION REPRESSOR HRCA"/>
    <property type="match status" value="1"/>
</dbReference>
<dbReference type="Pfam" id="PF01628">
    <property type="entry name" value="HrcA"/>
    <property type="match status" value="1"/>
</dbReference>
<dbReference type="Pfam" id="PF03444">
    <property type="entry name" value="HrcA_DNA-bdg"/>
    <property type="match status" value="1"/>
</dbReference>
<dbReference type="PIRSF" id="PIRSF005485">
    <property type="entry name" value="HrcA"/>
    <property type="match status" value="1"/>
</dbReference>
<dbReference type="SUPFAM" id="SSF55781">
    <property type="entry name" value="GAF domain-like"/>
    <property type="match status" value="1"/>
</dbReference>
<dbReference type="SUPFAM" id="SSF46785">
    <property type="entry name" value="Winged helix' DNA-binding domain"/>
    <property type="match status" value="1"/>
</dbReference>
<organism>
    <name type="scientific">Latilactobacillus sakei</name>
    <name type="common">Lactobacillus sakei</name>
    <dbReference type="NCBI Taxonomy" id="1599"/>
    <lineage>
        <taxon>Bacteria</taxon>
        <taxon>Bacillati</taxon>
        <taxon>Bacillota</taxon>
        <taxon>Bacilli</taxon>
        <taxon>Lactobacillales</taxon>
        <taxon>Lactobacillaceae</taxon>
        <taxon>Latilactobacillus</taxon>
    </lineage>
</organism>